<organism>
    <name type="scientific">Pseudomonas aeruginosa (strain UCBPP-PA14)</name>
    <dbReference type="NCBI Taxonomy" id="208963"/>
    <lineage>
        <taxon>Bacteria</taxon>
        <taxon>Pseudomonadati</taxon>
        <taxon>Pseudomonadota</taxon>
        <taxon>Gammaproteobacteria</taxon>
        <taxon>Pseudomonadales</taxon>
        <taxon>Pseudomonadaceae</taxon>
        <taxon>Pseudomonas</taxon>
    </lineage>
</organism>
<gene>
    <name evidence="1" type="primary">rplA</name>
    <name type="ordered locus">PA14_08730</name>
</gene>
<accession>Q02T90</accession>
<sequence length="231" mass="24234">MAKLTKRQKAIAEKVVAGKQYSFEEAAKLLAELSTIKFKESVDVAVNLGVDPRKSDQVVRGATVLPNGTGKSVRVAVFTQGPAAEAALAAGADKVGMDELAAEMKGGDLNYDVVIASPDAMRVVGQLGQILGPRGLMPNPKVGTVTPDVATAVKNAKAGQVRFRTDKNGIIHSSVGKVDFEPAKLQQNVEALLADLKRLKPSSSKGVYVKRVTLSTTMGPGLQIDLASLEA</sequence>
<proteinExistence type="inferred from homology"/>
<protein>
    <recommendedName>
        <fullName evidence="1">Large ribosomal subunit protein uL1</fullName>
    </recommendedName>
    <alternativeName>
        <fullName evidence="2">50S ribosomal protein L1</fullName>
    </alternativeName>
</protein>
<reference key="1">
    <citation type="journal article" date="2006" name="Genome Biol.">
        <title>Genomic analysis reveals that Pseudomonas aeruginosa virulence is combinatorial.</title>
        <authorList>
            <person name="Lee D.G."/>
            <person name="Urbach J.M."/>
            <person name="Wu G."/>
            <person name="Liberati N.T."/>
            <person name="Feinbaum R.L."/>
            <person name="Miyata S."/>
            <person name="Diggins L.T."/>
            <person name="He J."/>
            <person name="Saucier M."/>
            <person name="Deziel E."/>
            <person name="Friedman L."/>
            <person name="Li L."/>
            <person name="Grills G."/>
            <person name="Montgomery K."/>
            <person name="Kucherlapati R."/>
            <person name="Rahme L.G."/>
            <person name="Ausubel F.M."/>
        </authorList>
    </citation>
    <scope>NUCLEOTIDE SEQUENCE [LARGE SCALE GENOMIC DNA]</scope>
    <source>
        <strain>UCBPP-PA14</strain>
    </source>
</reference>
<keyword id="KW-0678">Repressor</keyword>
<keyword id="KW-0687">Ribonucleoprotein</keyword>
<keyword id="KW-0689">Ribosomal protein</keyword>
<keyword id="KW-0694">RNA-binding</keyword>
<keyword id="KW-0699">rRNA-binding</keyword>
<keyword id="KW-0810">Translation regulation</keyword>
<keyword id="KW-0820">tRNA-binding</keyword>
<evidence type="ECO:0000255" key="1">
    <source>
        <dbReference type="HAMAP-Rule" id="MF_01318"/>
    </source>
</evidence>
<evidence type="ECO:0000305" key="2"/>
<comment type="function">
    <text evidence="1">Binds directly to 23S rRNA. The L1 stalk is quite mobile in the ribosome, and is involved in E site tRNA release.</text>
</comment>
<comment type="function">
    <text evidence="1">Protein L1 is also a translational repressor protein, it controls the translation of the L11 operon by binding to its mRNA.</text>
</comment>
<comment type="subunit">
    <text evidence="1">Part of the 50S ribosomal subunit.</text>
</comment>
<comment type="similarity">
    <text evidence="1">Belongs to the universal ribosomal protein uL1 family.</text>
</comment>
<name>RL1_PSEAB</name>
<feature type="chain" id="PRO_0000308076" description="Large ribosomal subunit protein uL1">
    <location>
        <begin position="1"/>
        <end position="231"/>
    </location>
</feature>
<dbReference type="EMBL" id="CP000438">
    <property type="protein sequence ID" value="ABJ13544.1"/>
    <property type="molecule type" value="Genomic_DNA"/>
</dbReference>
<dbReference type="RefSeq" id="WP_003093749.1">
    <property type="nucleotide sequence ID" value="NZ_CP034244.1"/>
</dbReference>
<dbReference type="SMR" id="Q02T90"/>
<dbReference type="GeneID" id="77219188"/>
<dbReference type="KEGG" id="pau:PA14_08730"/>
<dbReference type="PseudoCAP" id="PA14_08730"/>
<dbReference type="HOGENOM" id="CLU_062853_0_0_6"/>
<dbReference type="BioCyc" id="PAER208963:G1G74-726-MONOMER"/>
<dbReference type="Proteomes" id="UP000000653">
    <property type="component" value="Chromosome"/>
</dbReference>
<dbReference type="GO" id="GO:0022625">
    <property type="term" value="C:cytosolic large ribosomal subunit"/>
    <property type="evidence" value="ECO:0007669"/>
    <property type="project" value="TreeGrafter"/>
</dbReference>
<dbReference type="GO" id="GO:0019843">
    <property type="term" value="F:rRNA binding"/>
    <property type="evidence" value="ECO:0007669"/>
    <property type="project" value="UniProtKB-UniRule"/>
</dbReference>
<dbReference type="GO" id="GO:0003735">
    <property type="term" value="F:structural constituent of ribosome"/>
    <property type="evidence" value="ECO:0007669"/>
    <property type="project" value="InterPro"/>
</dbReference>
<dbReference type="GO" id="GO:0000049">
    <property type="term" value="F:tRNA binding"/>
    <property type="evidence" value="ECO:0007669"/>
    <property type="project" value="UniProtKB-KW"/>
</dbReference>
<dbReference type="GO" id="GO:0006417">
    <property type="term" value="P:regulation of translation"/>
    <property type="evidence" value="ECO:0007669"/>
    <property type="project" value="UniProtKB-KW"/>
</dbReference>
<dbReference type="GO" id="GO:0006412">
    <property type="term" value="P:translation"/>
    <property type="evidence" value="ECO:0007669"/>
    <property type="project" value="UniProtKB-UniRule"/>
</dbReference>
<dbReference type="CDD" id="cd00403">
    <property type="entry name" value="Ribosomal_L1"/>
    <property type="match status" value="1"/>
</dbReference>
<dbReference type="FunFam" id="3.40.50.790:FF:000001">
    <property type="entry name" value="50S ribosomal protein L1"/>
    <property type="match status" value="1"/>
</dbReference>
<dbReference type="Gene3D" id="3.30.190.20">
    <property type="match status" value="1"/>
</dbReference>
<dbReference type="Gene3D" id="3.40.50.790">
    <property type="match status" value="1"/>
</dbReference>
<dbReference type="HAMAP" id="MF_01318_B">
    <property type="entry name" value="Ribosomal_uL1_B"/>
    <property type="match status" value="1"/>
</dbReference>
<dbReference type="InterPro" id="IPR005878">
    <property type="entry name" value="Ribosom_uL1_bac-type"/>
</dbReference>
<dbReference type="InterPro" id="IPR002143">
    <property type="entry name" value="Ribosomal_uL1"/>
</dbReference>
<dbReference type="InterPro" id="IPR023674">
    <property type="entry name" value="Ribosomal_uL1-like"/>
</dbReference>
<dbReference type="InterPro" id="IPR028364">
    <property type="entry name" value="Ribosomal_uL1/biogenesis"/>
</dbReference>
<dbReference type="InterPro" id="IPR016095">
    <property type="entry name" value="Ribosomal_uL1_3-a/b-sand"/>
</dbReference>
<dbReference type="InterPro" id="IPR023673">
    <property type="entry name" value="Ribosomal_uL1_CS"/>
</dbReference>
<dbReference type="NCBIfam" id="TIGR01169">
    <property type="entry name" value="rplA_bact"/>
    <property type="match status" value="1"/>
</dbReference>
<dbReference type="PANTHER" id="PTHR36427">
    <property type="entry name" value="54S RIBOSOMAL PROTEIN L1, MITOCHONDRIAL"/>
    <property type="match status" value="1"/>
</dbReference>
<dbReference type="PANTHER" id="PTHR36427:SF3">
    <property type="entry name" value="LARGE RIBOSOMAL SUBUNIT PROTEIN UL1M"/>
    <property type="match status" value="1"/>
</dbReference>
<dbReference type="Pfam" id="PF00687">
    <property type="entry name" value="Ribosomal_L1"/>
    <property type="match status" value="1"/>
</dbReference>
<dbReference type="PIRSF" id="PIRSF002155">
    <property type="entry name" value="Ribosomal_L1"/>
    <property type="match status" value="1"/>
</dbReference>
<dbReference type="SUPFAM" id="SSF56808">
    <property type="entry name" value="Ribosomal protein L1"/>
    <property type="match status" value="1"/>
</dbReference>
<dbReference type="PROSITE" id="PS01199">
    <property type="entry name" value="RIBOSOMAL_L1"/>
    <property type="match status" value="1"/>
</dbReference>